<sequence length="55" mass="6372">MAKGIREKIKLVSSAGTGHFYTTTKNKRTKPEKLELKKFDPVVRQHVIYKEAKIK</sequence>
<comment type="similarity">
    <text evidence="1">Belongs to the bacterial ribosomal protein bL33 family.</text>
</comment>
<dbReference type="EMBL" id="AM933172">
    <property type="protein sequence ID" value="CAR35128.1"/>
    <property type="molecule type" value="Genomic_DNA"/>
</dbReference>
<dbReference type="RefSeq" id="WP_001051798.1">
    <property type="nucleotide sequence ID" value="NC_011294.1"/>
</dbReference>
<dbReference type="SMR" id="B5R5G0"/>
<dbReference type="GeneID" id="97607673"/>
<dbReference type="KEGG" id="set:SEN3549"/>
<dbReference type="HOGENOM" id="CLU_190949_1_1_6"/>
<dbReference type="Proteomes" id="UP000000613">
    <property type="component" value="Chromosome"/>
</dbReference>
<dbReference type="GO" id="GO:0022625">
    <property type="term" value="C:cytosolic large ribosomal subunit"/>
    <property type="evidence" value="ECO:0007669"/>
    <property type="project" value="TreeGrafter"/>
</dbReference>
<dbReference type="GO" id="GO:0003735">
    <property type="term" value="F:structural constituent of ribosome"/>
    <property type="evidence" value="ECO:0007669"/>
    <property type="project" value="InterPro"/>
</dbReference>
<dbReference type="GO" id="GO:0006412">
    <property type="term" value="P:translation"/>
    <property type="evidence" value="ECO:0007669"/>
    <property type="project" value="UniProtKB-UniRule"/>
</dbReference>
<dbReference type="FunFam" id="2.20.28.120:FF:000001">
    <property type="entry name" value="50S ribosomal protein L33"/>
    <property type="match status" value="1"/>
</dbReference>
<dbReference type="Gene3D" id="2.20.28.120">
    <property type="entry name" value="Ribosomal protein L33"/>
    <property type="match status" value="1"/>
</dbReference>
<dbReference type="HAMAP" id="MF_00294">
    <property type="entry name" value="Ribosomal_bL33"/>
    <property type="match status" value="1"/>
</dbReference>
<dbReference type="InterPro" id="IPR001705">
    <property type="entry name" value="Ribosomal_bL33"/>
</dbReference>
<dbReference type="InterPro" id="IPR018264">
    <property type="entry name" value="Ribosomal_bL33_CS"/>
</dbReference>
<dbReference type="InterPro" id="IPR038584">
    <property type="entry name" value="Ribosomal_bL33_sf"/>
</dbReference>
<dbReference type="InterPro" id="IPR011332">
    <property type="entry name" value="Ribosomal_zn-bd"/>
</dbReference>
<dbReference type="NCBIfam" id="NF001860">
    <property type="entry name" value="PRK00595.1"/>
    <property type="match status" value="1"/>
</dbReference>
<dbReference type="NCBIfam" id="TIGR01023">
    <property type="entry name" value="rpmG_bact"/>
    <property type="match status" value="1"/>
</dbReference>
<dbReference type="PANTHER" id="PTHR15238">
    <property type="entry name" value="54S RIBOSOMAL PROTEIN L39, MITOCHONDRIAL"/>
    <property type="match status" value="1"/>
</dbReference>
<dbReference type="PANTHER" id="PTHR15238:SF1">
    <property type="entry name" value="LARGE RIBOSOMAL SUBUNIT PROTEIN BL33M"/>
    <property type="match status" value="1"/>
</dbReference>
<dbReference type="Pfam" id="PF00471">
    <property type="entry name" value="Ribosomal_L33"/>
    <property type="match status" value="1"/>
</dbReference>
<dbReference type="SUPFAM" id="SSF57829">
    <property type="entry name" value="Zn-binding ribosomal proteins"/>
    <property type="match status" value="1"/>
</dbReference>
<dbReference type="PROSITE" id="PS00582">
    <property type="entry name" value="RIBOSOMAL_L33"/>
    <property type="match status" value="1"/>
</dbReference>
<keyword id="KW-0687">Ribonucleoprotein</keyword>
<keyword id="KW-0689">Ribosomal protein</keyword>
<protein>
    <recommendedName>
        <fullName evidence="1">Large ribosomal subunit protein bL33</fullName>
    </recommendedName>
    <alternativeName>
        <fullName evidence="2">50S ribosomal protein L33</fullName>
    </alternativeName>
</protein>
<feature type="chain" id="PRO_0000356650" description="Large ribosomal subunit protein bL33">
    <location>
        <begin position="1"/>
        <end position="55"/>
    </location>
</feature>
<evidence type="ECO:0000255" key="1">
    <source>
        <dbReference type="HAMAP-Rule" id="MF_00294"/>
    </source>
</evidence>
<evidence type="ECO:0000305" key="2"/>
<accession>B5R5G0</accession>
<reference key="1">
    <citation type="journal article" date="2008" name="Genome Res.">
        <title>Comparative genome analysis of Salmonella enteritidis PT4 and Salmonella gallinarum 287/91 provides insights into evolutionary and host adaptation pathways.</title>
        <authorList>
            <person name="Thomson N.R."/>
            <person name="Clayton D.J."/>
            <person name="Windhorst D."/>
            <person name="Vernikos G."/>
            <person name="Davidson S."/>
            <person name="Churcher C."/>
            <person name="Quail M.A."/>
            <person name="Stevens M."/>
            <person name="Jones M.A."/>
            <person name="Watson M."/>
            <person name="Barron A."/>
            <person name="Layton A."/>
            <person name="Pickard D."/>
            <person name="Kingsley R.A."/>
            <person name="Bignell A."/>
            <person name="Clark L."/>
            <person name="Harris B."/>
            <person name="Ormond D."/>
            <person name="Abdellah Z."/>
            <person name="Brooks K."/>
            <person name="Cherevach I."/>
            <person name="Chillingworth T."/>
            <person name="Woodward J."/>
            <person name="Norberczak H."/>
            <person name="Lord A."/>
            <person name="Arrowsmith C."/>
            <person name="Jagels K."/>
            <person name="Moule S."/>
            <person name="Mungall K."/>
            <person name="Saunders M."/>
            <person name="Whitehead S."/>
            <person name="Chabalgoity J.A."/>
            <person name="Maskell D."/>
            <person name="Humphreys T."/>
            <person name="Roberts M."/>
            <person name="Barrow P.A."/>
            <person name="Dougan G."/>
            <person name="Parkhill J."/>
        </authorList>
    </citation>
    <scope>NUCLEOTIDE SEQUENCE [LARGE SCALE GENOMIC DNA]</scope>
    <source>
        <strain>P125109</strain>
    </source>
</reference>
<organism>
    <name type="scientific">Salmonella enteritidis PT4 (strain P125109)</name>
    <dbReference type="NCBI Taxonomy" id="550537"/>
    <lineage>
        <taxon>Bacteria</taxon>
        <taxon>Pseudomonadati</taxon>
        <taxon>Pseudomonadota</taxon>
        <taxon>Gammaproteobacteria</taxon>
        <taxon>Enterobacterales</taxon>
        <taxon>Enterobacteriaceae</taxon>
        <taxon>Salmonella</taxon>
    </lineage>
</organism>
<name>RL33_SALEP</name>
<proteinExistence type="inferred from homology"/>
<gene>
    <name evidence="1" type="primary">rpmG</name>
    <name type="ordered locus">SEN3549</name>
</gene>